<accession>C3NF69</accession>
<gene>
    <name evidence="1" type="primary">hemL</name>
    <name type="ordered locus">YN1551_0843</name>
</gene>
<evidence type="ECO:0000255" key="1">
    <source>
        <dbReference type="HAMAP-Rule" id="MF_00375"/>
    </source>
</evidence>
<dbReference type="EC" id="5.4.3.8" evidence="1"/>
<dbReference type="EMBL" id="CP001404">
    <property type="protein sequence ID" value="ACP47965.1"/>
    <property type="molecule type" value="Genomic_DNA"/>
</dbReference>
<dbReference type="RefSeq" id="WP_012714102.1">
    <property type="nucleotide sequence ID" value="NC_012623.1"/>
</dbReference>
<dbReference type="SMR" id="C3NF69"/>
<dbReference type="GeneID" id="84062267"/>
<dbReference type="KEGG" id="sin:YN1551_0843"/>
<dbReference type="HOGENOM" id="CLU_016922_1_5_2"/>
<dbReference type="UniPathway" id="UPA00251">
    <property type="reaction ID" value="UER00317"/>
</dbReference>
<dbReference type="Proteomes" id="UP000006818">
    <property type="component" value="Chromosome"/>
</dbReference>
<dbReference type="GO" id="GO:0005737">
    <property type="term" value="C:cytoplasm"/>
    <property type="evidence" value="ECO:0007669"/>
    <property type="project" value="UniProtKB-SubCell"/>
</dbReference>
<dbReference type="GO" id="GO:0042286">
    <property type="term" value="F:glutamate-1-semialdehyde 2,1-aminomutase activity"/>
    <property type="evidence" value="ECO:0007669"/>
    <property type="project" value="UniProtKB-UniRule"/>
</dbReference>
<dbReference type="GO" id="GO:0030170">
    <property type="term" value="F:pyridoxal phosphate binding"/>
    <property type="evidence" value="ECO:0007669"/>
    <property type="project" value="InterPro"/>
</dbReference>
<dbReference type="GO" id="GO:0008483">
    <property type="term" value="F:transaminase activity"/>
    <property type="evidence" value="ECO:0007669"/>
    <property type="project" value="InterPro"/>
</dbReference>
<dbReference type="GO" id="GO:0006782">
    <property type="term" value="P:protoporphyrinogen IX biosynthetic process"/>
    <property type="evidence" value="ECO:0007669"/>
    <property type="project" value="UniProtKB-UniRule"/>
</dbReference>
<dbReference type="CDD" id="cd00610">
    <property type="entry name" value="OAT_like"/>
    <property type="match status" value="1"/>
</dbReference>
<dbReference type="FunFam" id="3.40.640.10:FF:000021">
    <property type="entry name" value="Glutamate-1-semialdehyde 2,1-aminomutase"/>
    <property type="match status" value="1"/>
</dbReference>
<dbReference type="Gene3D" id="3.90.1150.10">
    <property type="entry name" value="Aspartate Aminotransferase, domain 1"/>
    <property type="match status" value="1"/>
</dbReference>
<dbReference type="Gene3D" id="3.40.640.10">
    <property type="entry name" value="Type I PLP-dependent aspartate aminotransferase-like (Major domain)"/>
    <property type="match status" value="1"/>
</dbReference>
<dbReference type="HAMAP" id="MF_00375">
    <property type="entry name" value="HemL_aminotrans_3"/>
    <property type="match status" value="1"/>
</dbReference>
<dbReference type="InterPro" id="IPR004639">
    <property type="entry name" value="4pyrrol_synth_GluAld_NH2Trfase"/>
</dbReference>
<dbReference type="InterPro" id="IPR005814">
    <property type="entry name" value="Aminotrans_3"/>
</dbReference>
<dbReference type="InterPro" id="IPR049704">
    <property type="entry name" value="Aminotrans_3_PPA_site"/>
</dbReference>
<dbReference type="InterPro" id="IPR015424">
    <property type="entry name" value="PyrdxlP-dep_Trfase"/>
</dbReference>
<dbReference type="InterPro" id="IPR015421">
    <property type="entry name" value="PyrdxlP-dep_Trfase_major"/>
</dbReference>
<dbReference type="InterPro" id="IPR015422">
    <property type="entry name" value="PyrdxlP-dep_Trfase_small"/>
</dbReference>
<dbReference type="NCBIfam" id="TIGR00713">
    <property type="entry name" value="hemL"/>
    <property type="match status" value="1"/>
</dbReference>
<dbReference type="NCBIfam" id="NF000818">
    <property type="entry name" value="PRK00062.1"/>
    <property type="match status" value="1"/>
</dbReference>
<dbReference type="PANTHER" id="PTHR43713">
    <property type="entry name" value="GLUTAMATE-1-SEMIALDEHYDE 2,1-AMINOMUTASE"/>
    <property type="match status" value="1"/>
</dbReference>
<dbReference type="PANTHER" id="PTHR43713:SF3">
    <property type="entry name" value="GLUTAMATE-1-SEMIALDEHYDE 2,1-AMINOMUTASE 1, CHLOROPLASTIC-RELATED"/>
    <property type="match status" value="1"/>
</dbReference>
<dbReference type="Pfam" id="PF00202">
    <property type="entry name" value="Aminotran_3"/>
    <property type="match status" value="1"/>
</dbReference>
<dbReference type="SUPFAM" id="SSF53383">
    <property type="entry name" value="PLP-dependent transferases"/>
    <property type="match status" value="1"/>
</dbReference>
<dbReference type="PROSITE" id="PS00600">
    <property type="entry name" value="AA_TRANSFER_CLASS_3"/>
    <property type="match status" value="1"/>
</dbReference>
<sequence length="426" mass="47261">MDKGRCTILNSEELWAQARQLFAGGVNSPVRAAVKPFPFYVERGKGAYIYTVEGNKFIDYVLGYGPLILGHSPESVKRKIIEQLEKGWLFGTPSKLEIELAKKISSHIPSAQKIRFVNSGTEATMAAIRLARGYSKRSKILKFSGNYHGAHDYTLVEAGSAATEYNVTTSDGIPMEIMKTVEICEFNDLDCVDKKLRNEDIAAALLEPIMGNAGVILPEKGFLSGLRELTKSYNSLLIFDEVITGFRIDIGGAQSYYQIYPDITTLGKIIGGGFPIGAVAGKAEIIDNFTPAGRVFNAGTFNANPISMIAGIATIEELEKEYPYNIANKASKTLVEELERLLKIKHTINHIGSMFQVFFGIDKVRNYSDAKRANKEYYIKFHERLLKERVFIPPSQYETIFTSAAHEDDVVNDTIDKLAKVIGELS</sequence>
<name>GSA_SACI1</name>
<comment type="catalytic activity">
    <reaction evidence="1">
        <text>(S)-4-amino-5-oxopentanoate = 5-aminolevulinate</text>
        <dbReference type="Rhea" id="RHEA:14265"/>
        <dbReference type="ChEBI" id="CHEBI:57501"/>
        <dbReference type="ChEBI" id="CHEBI:356416"/>
        <dbReference type="EC" id="5.4.3.8"/>
    </reaction>
</comment>
<comment type="cofactor">
    <cofactor evidence="1">
        <name>pyridoxal 5'-phosphate</name>
        <dbReference type="ChEBI" id="CHEBI:597326"/>
    </cofactor>
</comment>
<comment type="pathway">
    <text evidence="1">Porphyrin-containing compound metabolism; protoporphyrin-IX biosynthesis; 5-aminolevulinate from L-glutamyl-tRNA(Glu): step 2/2.</text>
</comment>
<comment type="subcellular location">
    <subcellularLocation>
        <location evidence="1">Cytoplasm</location>
    </subcellularLocation>
</comment>
<comment type="similarity">
    <text evidence="1">Belongs to the class-III pyridoxal-phosphate-dependent aminotransferase family. HemL subfamily.</text>
</comment>
<feature type="chain" id="PRO_0000382418" description="Glutamate-1-semialdehyde 2,1-aminomutase">
    <location>
        <begin position="1"/>
        <end position="426"/>
    </location>
</feature>
<feature type="modified residue" description="N6-(pyridoxal phosphate)lysine" evidence="1">
    <location>
        <position position="268"/>
    </location>
</feature>
<keyword id="KW-0963">Cytoplasm</keyword>
<keyword id="KW-0413">Isomerase</keyword>
<keyword id="KW-0627">Porphyrin biosynthesis</keyword>
<keyword id="KW-0663">Pyridoxal phosphate</keyword>
<reference key="1">
    <citation type="journal article" date="2009" name="Proc. Natl. Acad. Sci. U.S.A.">
        <title>Biogeography of the Sulfolobus islandicus pan-genome.</title>
        <authorList>
            <person name="Reno M.L."/>
            <person name="Held N.L."/>
            <person name="Fields C.J."/>
            <person name="Burke P.V."/>
            <person name="Whitaker R.J."/>
        </authorList>
    </citation>
    <scope>NUCLEOTIDE SEQUENCE [LARGE SCALE GENOMIC DNA]</scope>
    <source>
        <strain>Y.N.15.51 / Yellowstone #2</strain>
    </source>
</reference>
<organism>
    <name type="scientific">Saccharolobus islandicus (strain Y.N.15.51 / Yellowstone #2)</name>
    <name type="common">Sulfolobus islandicus</name>
    <dbReference type="NCBI Taxonomy" id="419942"/>
    <lineage>
        <taxon>Archaea</taxon>
        <taxon>Thermoproteota</taxon>
        <taxon>Thermoprotei</taxon>
        <taxon>Sulfolobales</taxon>
        <taxon>Sulfolobaceae</taxon>
        <taxon>Saccharolobus</taxon>
    </lineage>
</organism>
<proteinExistence type="inferred from homology"/>
<protein>
    <recommendedName>
        <fullName evidence="1">Glutamate-1-semialdehyde 2,1-aminomutase</fullName>
        <shortName evidence="1">GSA</shortName>
        <ecNumber evidence="1">5.4.3.8</ecNumber>
    </recommendedName>
    <alternativeName>
        <fullName evidence="1">Glutamate-1-semialdehyde aminotransferase</fullName>
        <shortName evidence="1">GSA-AT</shortName>
    </alternativeName>
</protein>